<keyword id="KW-0030">Aminoacyl-tRNA synthetase</keyword>
<keyword id="KW-0067">ATP-binding</keyword>
<keyword id="KW-0963">Cytoplasm</keyword>
<keyword id="KW-0436">Ligase</keyword>
<keyword id="KW-0479">Metal-binding</keyword>
<keyword id="KW-0547">Nucleotide-binding</keyword>
<keyword id="KW-0648">Protein biosynthesis</keyword>
<keyword id="KW-0862">Zinc</keyword>
<name>SYI_LACJO</name>
<evidence type="ECO:0000255" key="1">
    <source>
        <dbReference type="HAMAP-Rule" id="MF_02002"/>
    </source>
</evidence>
<evidence type="ECO:0000305" key="2"/>
<accession>Q74JX6</accession>
<dbReference type="EC" id="6.1.1.5" evidence="1"/>
<dbReference type="EMBL" id="AE017198">
    <property type="protein sequence ID" value="AAS08801.1"/>
    <property type="status" value="ALT_INIT"/>
    <property type="molecule type" value="Genomic_DNA"/>
</dbReference>
<dbReference type="RefSeq" id="WP_044496687.1">
    <property type="nucleotide sequence ID" value="NC_005362.1"/>
</dbReference>
<dbReference type="SMR" id="Q74JX6"/>
<dbReference type="KEGG" id="ljo:LJ_0980"/>
<dbReference type="PATRIC" id="fig|257314.6.peg.839"/>
<dbReference type="eggNOG" id="COG0060">
    <property type="taxonomic scope" value="Bacteria"/>
</dbReference>
<dbReference type="HOGENOM" id="CLU_001493_7_1_9"/>
<dbReference type="Proteomes" id="UP000000581">
    <property type="component" value="Chromosome"/>
</dbReference>
<dbReference type="GO" id="GO:0005829">
    <property type="term" value="C:cytosol"/>
    <property type="evidence" value="ECO:0007669"/>
    <property type="project" value="TreeGrafter"/>
</dbReference>
<dbReference type="GO" id="GO:0002161">
    <property type="term" value="F:aminoacyl-tRNA deacylase activity"/>
    <property type="evidence" value="ECO:0007669"/>
    <property type="project" value="InterPro"/>
</dbReference>
<dbReference type="GO" id="GO:0005524">
    <property type="term" value="F:ATP binding"/>
    <property type="evidence" value="ECO:0007669"/>
    <property type="project" value="UniProtKB-UniRule"/>
</dbReference>
<dbReference type="GO" id="GO:0004822">
    <property type="term" value="F:isoleucine-tRNA ligase activity"/>
    <property type="evidence" value="ECO:0007669"/>
    <property type="project" value="UniProtKB-UniRule"/>
</dbReference>
<dbReference type="GO" id="GO:0000049">
    <property type="term" value="F:tRNA binding"/>
    <property type="evidence" value="ECO:0007669"/>
    <property type="project" value="InterPro"/>
</dbReference>
<dbReference type="GO" id="GO:0008270">
    <property type="term" value="F:zinc ion binding"/>
    <property type="evidence" value="ECO:0007669"/>
    <property type="project" value="UniProtKB-UniRule"/>
</dbReference>
<dbReference type="GO" id="GO:0006428">
    <property type="term" value="P:isoleucyl-tRNA aminoacylation"/>
    <property type="evidence" value="ECO:0007669"/>
    <property type="project" value="UniProtKB-UniRule"/>
</dbReference>
<dbReference type="CDD" id="cd07960">
    <property type="entry name" value="Anticodon_Ia_Ile_BEm"/>
    <property type="match status" value="1"/>
</dbReference>
<dbReference type="CDD" id="cd00818">
    <property type="entry name" value="IleRS_core"/>
    <property type="match status" value="1"/>
</dbReference>
<dbReference type="FunFam" id="1.10.730.20:FF:000001">
    <property type="entry name" value="Isoleucine--tRNA ligase"/>
    <property type="match status" value="1"/>
</dbReference>
<dbReference type="FunFam" id="3.40.50.620:FF:000152">
    <property type="entry name" value="Isoleucine--tRNA ligase"/>
    <property type="match status" value="1"/>
</dbReference>
<dbReference type="Gene3D" id="1.10.730.20">
    <property type="match status" value="1"/>
</dbReference>
<dbReference type="Gene3D" id="3.40.50.620">
    <property type="entry name" value="HUPs"/>
    <property type="match status" value="2"/>
</dbReference>
<dbReference type="Gene3D" id="1.10.10.830">
    <property type="entry name" value="Ile-tRNA synthetase CP2 domain-like"/>
    <property type="match status" value="1"/>
</dbReference>
<dbReference type="Gene3D" id="3.90.740.10">
    <property type="entry name" value="Valyl/Leucyl/Isoleucyl-tRNA synthetase, editing domain"/>
    <property type="match status" value="1"/>
</dbReference>
<dbReference type="HAMAP" id="MF_02002">
    <property type="entry name" value="Ile_tRNA_synth_type1"/>
    <property type="match status" value="1"/>
</dbReference>
<dbReference type="InterPro" id="IPR001412">
    <property type="entry name" value="aa-tRNA-synth_I_CS"/>
</dbReference>
<dbReference type="InterPro" id="IPR002300">
    <property type="entry name" value="aa-tRNA-synth_Ia"/>
</dbReference>
<dbReference type="InterPro" id="IPR033708">
    <property type="entry name" value="Anticodon_Ile_BEm"/>
</dbReference>
<dbReference type="InterPro" id="IPR002301">
    <property type="entry name" value="Ile-tRNA-ligase"/>
</dbReference>
<dbReference type="InterPro" id="IPR023585">
    <property type="entry name" value="Ile-tRNA-ligase_type1"/>
</dbReference>
<dbReference type="InterPro" id="IPR050081">
    <property type="entry name" value="Ile-tRNA_ligase"/>
</dbReference>
<dbReference type="InterPro" id="IPR013155">
    <property type="entry name" value="M/V/L/I-tRNA-synth_anticd-bd"/>
</dbReference>
<dbReference type="InterPro" id="IPR014729">
    <property type="entry name" value="Rossmann-like_a/b/a_fold"/>
</dbReference>
<dbReference type="InterPro" id="IPR009080">
    <property type="entry name" value="tRNAsynth_Ia_anticodon-bd"/>
</dbReference>
<dbReference type="InterPro" id="IPR009008">
    <property type="entry name" value="Val/Leu/Ile-tRNA-synth_edit"/>
</dbReference>
<dbReference type="InterPro" id="IPR010663">
    <property type="entry name" value="Znf_FPG/IleRS"/>
</dbReference>
<dbReference type="NCBIfam" id="TIGR00392">
    <property type="entry name" value="ileS"/>
    <property type="match status" value="1"/>
</dbReference>
<dbReference type="PANTHER" id="PTHR42765:SF1">
    <property type="entry name" value="ISOLEUCINE--TRNA LIGASE, MITOCHONDRIAL"/>
    <property type="match status" value="1"/>
</dbReference>
<dbReference type="PANTHER" id="PTHR42765">
    <property type="entry name" value="SOLEUCYL-TRNA SYNTHETASE"/>
    <property type="match status" value="1"/>
</dbReference>
<dbReference type="Pfam" id="PF08264">
    <property type="entry name" value="Anticodon_1"/>
    <property type="match status" value="1"/>
</dbReference>
<dbReference type="Pfam" id="PF00133">
    <property type="entry name" value="tRNA-synt_1"/>
    <property type="match status" value="1"/>
</dbReference>
<dbReference type="Pfam" id="PF06827">
    <property type="entry name" value="zf-FPG_IleRS"/>
    <property type="match status" value="1"/>
</dbReference>
<dbReference type="PRINTS" id="PR00984">
    <property type="entry name" value="TRNASYNTHILE"/>
</dbReference>
<dbReference type="SUPFAM" id="SSF47323">
    <property type="entry name" value="Anticodon-binding domain of a subclass of class I aminoacyl-tRNA synthetases"/>
    <property type="match status" value="1"/>
</dbReference>
<dbReference type="SUPFAM" id="SSF52374">
    <property type="entry name" value="Nucleotidylyl transferase"/>
    <property type="match status" value="1"/>
</dbReference>
<dbReference type="SUPFAM" id="SSF50677">
    <property type="entry name" value="ValRS/IleRS/LeuRS editing domain"/>
    <property type="match status" value="1"/>
</dbReference>
<dbReference type="PROSITE" id="PS00178">
    <property type="entry name" value="AA_TRNA_LIGASE_I"/>
    <property type="match status" value="1"/>
</dbReference>
<reference key="1">
    <citation type="journal article" date="2004" name="Proc. Natl. Acad. Sci. U.S.A.">
        <title>The genome sequence of the probiotic intestinal bacterium Lactobacillus johnsonii NCC 533.</title>
        <authorList>
            <person name="Pridmore R.D."/>
            <person name="Berger B."/>
            <person name="Desiere F."/>
            <person name="Vilanova D."/>
            <person name="Barretto C."/>
            <person name="Pittet A.-C."/>
            <person name="Zwahlen M.-C."/>
            <person name="Rouvet M."/>
            <person name="Altermann E."/>
            <person name="Barrangou R."/>
            <person name="Mollet B."/>
            <person name="Mercenier A."/>
            <person name="Klaenhammer T."/>
            <person name="Arigoni F."/>
            <person name="Schell M.A."/>
        </authorList>
    </citation>
    <scope>NUCLEOTIDE SEQUENCE [LARGE SCALE GENOMIC DNA]</scope>
    <source>
        <strain>CNCM I-1225 / La1 / NCC 533</strain>
    </source>
</reference>
<sequence length="928" mass="105960">MRVKDTLNLGKTKFKMRGNLPVREAEWQKEWEENKLYEQRLKLNEGKPRFDLHDGPPFANGNIHMGHSLNKISKDIIVRFKNMNGYYAPYVPGWDTHGLPVEQQLAKKGVDRKTMDRAKYRELCRQFAEEQVQKQMADFKRLGVMADWDHPYITLQPKFEAEEIRVFGEMFKKGYIYKGKKPVYWSWSSESTLAEAEVEYHDIKSPRIYVAFPIKDGKGILDSDTSLVIWTTTPWTIPSNVGITVNPKFDYSVVEVNGKKYVIGSQRLSAVAEDLGWEDYKVVKTLKGTDFDRMTYQHPLYDVTGVIMNDTYVTADDGTGLVHNATGFGEDDYNVGRRYGLPVFSPMDAQGRFTKEVPDPDLVGMFYDDANKVVADKLEKAGALLKLSFFTHSYPHDWRTKKPVIYRATTQWFASIDKFRDQILAEIEKANFIPAWGKTRLYNMIKDRGDWVISRQRAWGVPLPIFYAEDDTPIVTPETIEHVAQIFEKEGSNAWYTYTAEELLPEGFKSEHSPNGKFRKETDILDVWFDSGSSWAGVMQERDGLGFPADLYLEGSDQYRGWFNSSLITSVAVTGKAPYKQVLSQGFVLDDKGHKMSKSLGNVISPNDVIKQMGAEIIRLWVAGADTTSDVAVSQDILRQSAESYRKIRNTMRFMLANTSDFDPKEDAIAYPDMSGVDQYMEIKLNRLIEEAIEAYNKFDFNSVYKKVFSFISNDLSAFYLDFAKDILYIDAEDSETRRSMQTVIYDVLVKLTKLMTPILPHTMEEVWGYLKEPEDYVQLANMPEVDHFANEDEVLADWNAFMKVRSDVLKALEKARNAKVIGKSFEAHVTLYPTEETKALLDKLNANIRQILIVSDLTISDEEAPENAEKLPTASIVVEHAAGEVCPRCRRTTTDVGSDPRFPELCARCAAIVAENFPEAEKEGLEK</sequence>
<feature type="chain" id="PRO_0000098402" description="Isoleucine--tRNA ligase">
    <location>
        <begin position="1"/>
        <end position="928"/>
    </location>
</feature>
<feature type="short sequence motif" description="'HIGH' region">
    <location>
        <begin position="57"/>
        <end position="67"/>
    </location>
</feature>
<feature type="short sequence motif" description="'KMSKS' region">
    <location>
        <begin position="595"/>
        <end position="599"/>
    </location>
</feature>
<feature type="binding site" evidence="1">
    <location>
        <position position="554"/>
    </location>
    <ligand>
        <name>L-isoleucyl-5'-AMP</name>
        <dbReference type="ChEBI" id="CHEBI:178002"/>
    </ligand>
</feature>
<feature type="binding site" evidence="1">
    <location>
        <position position="598"/>
    </location>
    <ligand>
        <name>ATP</name>
        <dbReference type="ChEBI" id="CHEBI:30616"/>
    </ligand>
</feature>
<feature type="binding site" evidence="1">
    <location>
        <position position="887"/>
    </location>
    <ligand>
        <name>Zn(2+)</name>
        <dbReference type="ChEBI" id="CHEBI:29105"/>
    </ligand>
</feature>
<feature type="binding site" evidence="1">
    <location>
        <position position="890"/>
    </location>
    <ligand>
        <name>Zn(2+)</name>
        <dbReference type="ChEBI" id="CHEBI:29105"/>
    </ligand>
</feature>
<feature type="binding site" evidence="1">
    <location>
        <position position="907"/>
    </location>
    <ligand>
        <name>Zn(2+)</name>
        <dbReference type="ChEBI" id="CHEBI:29105"/>
    </ligand>
</feature>
<feature type="binding site" evidence="1">
    <location>
        <position position="910"/>
    </location>
    <ligand>
        <name>Zn(2+)</name>
        <dbReference type="ChEBI" id="CHEBI:29105"/>
    </ligand>
</feature>
<comment type="function">
    <text evidence="1">Catalyzes the attachment of isoleucine to tRNA(Ile). As IleRS can inadvertently accommodate and process structurally similar amino acids such as valine, to avoid such errors it has two additional distinct tRNA(Ile)-dependent editing activities. One activity is designated as 'pretransfer' editing and involves the hydrolysis of activated Val-AMP. The other activity is designated 'posttransfer' editing and involves deacylation of mischarged Val-tRNA(Ile).</text>
</comment>
<comment type="catalytic activity">
    <reaction evidence="1">
        <text>tRNA(Ile) + L-isoleucine + ATP = L-isoleucyl-tRNA(Ile) + AMP + diphosphate</text>
        <dbReference type="Rhea" id="RHEA:11060"/>
        <dbReference type="Rhea" id="RHEA-COMP:9666"/>
        <dbReference type="Rhea" id="RHEA-COMP:9695"/>
        <dbReference type="ChEBI" id="CHEBI:30616"/>
        <dbReference type="ChEBI" id="CHEBI:33019"/>
        <dbReference type="ChEBI" id="CHEBI:58045"/>
        <dbReference type="ChEBI" id="CHEBI:78442"/>
        <dbReference type="ChEBI" id="CHEBI:78528"/>
        <dbReference type="ChEBI" id="CHEBI:456215"/>
        <dbReference type="EC" id="6.1.1.5"/>
    </reaction>
</comment>
<comment type="cofactor">
    <cofactor evidence="1">
        <name>Zn(2+)</name>
        <dbReference type="ChEBI" id="CHEBI:29105"/>
    </cofactor>
    <text evidence="1">Binds 1 zinc ion per subunit.</text>
</comment>
<comment type="subunit">
    <text evidence="1">Monomer.</text>
</comment>
<comment type="subcellular location">
    <subcellularLocation>
        <location evidence="1">Cytoplasm</location>
    </subcellularLocation>
</comment>
<comment type="domain">
    <text evidence="1">IleRS has two distinct active sites: one for aminoacylation and one for editing. The misactivated valine is translocated from the active site to the editing site, which sterically excludes the correctly activated isoleucine. The single editing site contains two valyl binding pockets, one specific for each substrate (Val-AMP or Val-tRNA(Ile)).</text>
</comment>
<comment type="similarity">
    <text evidence="1">Belongs to the class-I aminoacyl-tRNA synthetase family. IleS type 1 subfamily.</text>
</comment>
<comment type="sequence caution" evidence="2">
    <conflict type="erroneous initiation">
        <sequence resource="EMBL-CDS" id="AAS08801"/>
    </conflict>
</comment>
<gene>
    <name evidence="1" type="primary">ileS</name>
    <name type="ordered locus">LJ_0980</name>
</gene>
<organism>
    <name type="scientific">Lactobacillus johnsonii (strain CNCM I-12250 / La1 / NCC 533)</name>
    <dbReference type="NCBI Taxonomy" id="257314"/>
    <lineage>
        <taxon>Bacteria</taxon>
        <taxon>Bacillati</taxon>
        <taxon>Bacillota</taxon>
        <taxon>Bacilli</taxon>
        <taxon>Lactobacillales</taxon>
        <taxon>Lactobacillaceae</taxon>
        <taxon>Lactobacillus</taxon>
    </lineage>
</organism>
<protein>
    <recommendedName>
        <fullName evidence="1">Isoleucine--tRNA ligase</fullName>
        <ecNumber evidence="1">6.1.1.5</ecNumber>
    </recommendedName>
    <alternativeName>
        <fullName evidence="1">Isoleucyl-tRNA synthetase</fullName>
        <shortName evidence="1">IleRS</shortName>
    </alternativeName>
</protein>
<proteinExistence type="inferred from homology"/>